<organism evidence="8">
    <name type="scientific">Pseudomonas putida (strain ATCC 47054 / DSM 6125 / CFBP 8728 / NCIMB 11950 / KT2440)</name>
    <dbReference type="NCBI Taxonomy" id="160488"/>
    <lineage>
        <taxon>Bacteria</taxon>
        <taxon>Pseudomonadati</taxon>
        <taxon>Pseudomonadota</taxon>
        <taxon>Gammaproteobacteria</taxon>
        <taxon>Pseudomonadales</taxon>
        <taxon>Pseudomonadaceae</taxon>
        <taxon>Pseudomonas</taxon>
    </lineage>
</organism>
<name>GMHBB_PSEPK</name>
<protein>
    <recommendedName>
        <fullName evidence="1">D-glycero-beta-D-manno-heptose-1,7-bisphosphate 7-phosphatase</fullName>
        <ecNumber evidence="4">3.1.3.82</ecNumber>
    </recommendedName>
    <alternativeName>
        <fullName evidence="3">D,D-heptose 1,7-bisphosphate phosphatase</fullName>
        <shortName evidence="1">HBP phosphatase</shortName>
    </alternativeName>
</protein>
<keyword id="KW-0119">Carbohydrate metabolism</keyword>
<keyword id="KW-0963">Cytoplasm</keyword>
<keyword id="KW-0378">Hydrolase</keyword>
<keyword id="KW-0448">Lipopolysaccharide biosynthesis</keyword>
<keyword id="KW-0460">Magnesium</keyword>
<keyword id="KW-0479">Metal-binding</keyword>
<keyword id="KW-1185">Reference proteome</keyword>
<keyword id="KW-0862">Zinc</keyword>
<evidence type="ECO:0000250" key="1">
    <source>
        <dbReference type="UniProtKB" id="P63228"/>
    </source>
</evidence>
<evidence type="ECO:0000250" key="2">
    <source>
        <dbReference type="UniProtKB" id="Q7WG29"/>
    </source>
</evidence>
<evidence type="ECO:0000255" key="3">
    <source>
        <dbReference type="PIRNR" id="PIRNR004682"/>
    </source>
</evidence>
<evidence type="ECO:0000269" key="4">
    <source>
    </source>
</evidence>
<evidence type="ECO:0000305" key="5"/>
<evidence type="ECO:0000305" key="6">
    <source>
    </source>
</evidence>
<evidence type="ECO:0000312" key="7">
    <source>
        <dbReference type="EMBL" id="AAN65693.1"/>
    </source>
</evidence>
<evidence type="ECO:0000312" key="8">
    <source>
        <dbReference type="Proteomes" id="UP000000556"/>
    </source>
</evidence>
<gene>
    <name evidence="1" type="primary">gmhB</name>
    <name evidence="7" type="ordered locus">PP_0059</name>
</gene>
<proteinExistence type="evidence at protein level"/>
<feature type="chain" id="PRO_0000435566" description="D-glycero-beta-D-manno-heptose-1,7-bisphosphate 7-phosphatase" evidence="5">
    <location>
        <begin position="1"/>
        <end position="175"/>
    </location>
</feature>
<feature type="active site" description="Nucleophile" evidence="1">
    <location>
        <position position="7"/>
    </location>
</feature>
<feature type="active site" description="Proton donor" evidence="1">
    <location>
        <position position="9"/>
    </location>
</feature>
<feature type="binding site" evidence="1">
    <location>
        <begin position="7"/>
        <end position="9"/>
    </location>
    <ligand>
        <name>substrate</name>
    </ligand>
</feature>
<feature type="binding site" evidence="1">
    <location>
        <position position="7"/>
    </location>
    <ligand>
        <name>Mg(2+)</name>
        <dbReference type="ChEBI" id="CHEBI:18420"/>
    </ligand>
</feature>
<feature type="binding site" evidence="1">
    <location>
        <position position="9"/>
    </location>
    <ligand>
        <name>Mg(2+)</name>
        <dbReference type="ChEBI" id="CHEBI:18420"/>
    </ligand>
</feature>
<feature type="binding site" evidence="1">
    <location>
        <begin position="15"/>
        <end position="19"/>
    </location>
    <ligand>
        <name>substrate</name>
    </ligand>
</feature>
<feature type="binding site" evidence="1">
    <location>
        <begin position="50"/>
        <end position="53"/>
    </location>
    <ligand>
        <name>substrate</name>
    </ligand>
</feature>
<feature type="binding site" evidence="2">
    <location>
        <position position="89"/>
    </location>
    <ligand>
        <name>Zn(2+)</name>
        <dbReference type="ChEBI" id="CHEBI:29105"/>
    </ligand>
</feature>
<feature type="binding site" evidence="2">
    <location>
        <position position="91"/>
    </location>
    <ligand>
        <name>Zn(2+)</name>
        <dbReference type="ChEBI" id="CHEBI:29105"/>
    </ligand>
</feature>
<feature type="binding site" evidence="2">
    <location>
        <position position="97"/>
    </location>
    <ligand>
        <name>Zn(2+)</name>
        <dbReference type="ChEBI" id="CHEBI:29105"/>
    </ligand>
</feature>
<feature type="binding site" evidence="2">
    <location>
        <position position="99"/>
    </location>
    <ligand>
        <name>Zn(2+)</name>
        <dbReference type="ChEBI" id="CHEBI:29105"/>
    </ligand>
</feature>
<feature type="binding site" evidence="1">
    <location>
        <begin position="100"/>
        <end position="101"/>
    </location>
    <ligand>
        <name>substrate</name>
    </ligand>
</feature>
<feature type="binding site" evidence="1">
    <location>
        <position position="126"/>
    </location>
    <ligand>
        <name>Mg(2+)</name>
        <dbReference type="ChEBI" id="CHEBI:18420"/>
    </ligand>
</feature>
<feature type="site" description="Stabilizes the phosphoryl group" evidence="1">
    <location>
        <position position="50"/>
    </location>
</feature>
<feature type="site" description="Contributes to substrate recognition" evidence="1">
    <location>
        <position position="100"/>
    </location>
</feature>
<feature type="site" description="Stabilizes the phosphoryl group" evidence="1">
    <location>
        <position position="101"/>
    </location>
</feature>
<comment type="function">
    <text evidence="4">Converts the D-glycero-beta-D-manno-heptose 1,7-bisphosphate (beta-HBP) intermediate into D-glycero-beta-D-manno-heptose 1-phosphate by removing the phosphate group at the C-7 position.</text>
</comment>
<comment type="catalytic activity">
    <reaction evidence="4">
        <text>D-glycero-beta-D-manno-heptose 1,7-bisphosphate + H2O = D-glycero-beta-D-manno-heptose 1-phosphate + phosphate</text>
        <dbReference type="Rhea" id="RHEA:28518"/>
        <dbReference type="ChEBI" id="CHEBI:15377"/>
        <dbReference type="ChEBI" id="CHEBI:43474"/>
        <dbReference type="ChEBI" id="CHEBI:60208"/>
        <dbReference type="ChEBI" id="CHEBI:61593"/>
        <dbReference type="EC" id="3.1.3.82"/>
    </reaction>
</comment>
<comment type="cofactor">
    <cofactor evidence="4">
        <name>Mg(2+)</name>
        <dbReference type="ChEBI" id="CHEBI:18420"/>
    </cofactor>
</comment>
<comment type="cofactor">
    <cofactor evidence="1">
        <name>Zn(2+)</name>
        <dbReference type="ChEBI" id="CHEBI:29105"/>
    </cofactor>
</comment>
<comment type="pathway">
    <text evidence="6">Nucleotide-sugar biosynthesis; ADP-L-glycero-beta-D-manno-heptose biosynthesis; ADP-L-glycero-beta-D-manno-heptose from D-glycero-beta-D-manno-heptose 7-phosphate: step 2/4.</text>
</comment>
<comment type="pathway">
    <text evidence="1">Bacterial outer membrane biogenesis; LPS core biosynthesis.</text>
</comment>
<comment type="subunit">
    <text evidence="1">Monomer.</text>
</comment>
<comment type="subcellular location">
    <subcellularLocation>
        <location evidence="3">Cytoplasm</location>
    </subcellularLocation>
</comment>
<comment type="similarity">
    <text evidence="3">Belongs to the gmhB family.</text>
</comment>
<dbReference type="EC" id="3.1.3.82" evidence="4"/>
<dbReference type="EMBL" id="AE015451">
    <property type="protein sequence ID" value="AAN65693.1"/>
    <property type="molecule type" value="Genomic_DNA"/>
</dbReference>
<dbReference type="RefSeq" id="NP_742229.1">
    <property type="nucleotide sequence ID" value="NC_002947.4"/>
</dbReference>
<dbReference type="RefSeq" id="WP_003253129.1">
    <property type="nucleotide sequence ID" value="NZ_CP169744.1"/>
</dbReference>
<dbReference type="SMR" id="Q88RS0"/>
<dbReference type="STRING" id="160488.PP_0059"/>
<dbReference type="ChEMBL" id="CHEMBL4105992"/>
<dbReference type="PaxDb" id="160488-PP_0059"/>
<dbReference type="GeneID" id="83677303"/>
<dbReference type="KEGG" id="ppu:PP_0059"/>
<dbReference type="PATRIC" id="fig|160488.4.peg.64"/>
<dbReference type="eggNOG" id="COG0241">
    <property type="taxonomic scope" value="Bacteria"/>
</dbReference>
<dbReference type="HOGENOM" id="CLU_085077_2_0_6"/>
<dbReference type="OrthoDB" id="9781367at2"/>
<dbReference type="PhylomeDB" id="Q88RS0"/>
<dbReference type="BioCyc" id="PPUT160488:G1G01-62-MONOMER"/>
<dbReference type="UniPathway" id="UPA00356">
    <property type="reaction ID" value="UER00438"/>
</dbReference>
<dbReference type="UniPathway" id="UPA00958"/>
<dbReference type="Proteomes" id="UP000000556">
    <property type="component" value="Chromosome"/>
</dbReference>
<dbReference type="GO" id="GO:0005737">
    <property type="term" value="C:cytoplasm"/>
    <property type="evidence" value="ECO:0007669"/>
    <property type="project" value="UniProtKB-SubCell"/>
</dbReference>
<dbReference type="GO" id="GO:0034200">
    <property type="term" value="F:D-glycero-beta-D-manno-heptose 1,7-bisphosphate 7-phosphatase activity"/>
    <property type="evidence" value="ECO:0007669"/>
    <property type="project" value="UniProtKB-EC"/>
</dbReference>
<dbReference type="GO" id="GO:0046872">
    <property type="term" value="F:metal ion binding"/>
    <property type="evidence" value="ECO:0007669"/>
    <property type="project" value="UniProtKB-KW"/>
</dbReference>
<dbReference type="GO" id="GO:0097171">
    <property type="term" value="P:ADP-L-glycero-beta-D-manno-heptose biosynthetic process"/>
    <property type="evidence" value="ECO:0007669"/>
    <property type="project" value="UniProtKB-UniPathway"/>
</dbReference>
<dbReference type="GO" id="GO:0009244">
    <property type="term" value="P:lipopolysaccharide core region biosynthetic process"/>
    <property type="evidence" value="ECO:0007669"/>
    <property type="project" value="UniProtKB-UniPathway"/>
</dbReference>
<dbReference type="CDD" id="cd07503">
    <property type="entry name" value="HAD_HisB-N"/>
    <property type="match status" value="1"/>
</dbReference>
<dbReference type="FunFam" id="3.40.50.1000:FF:000168">
    <property type="entry name" value="D,D-heptose 1,7-bisphosphate phosphatase"/>
    <property type="match status" value="1"/>
</dbReference>
<dbReference type="Gene3D" id="3.40.50.1000">
    <property type="entry name" value="HAD superfamily/HAD-like"/>
    <property type="match status" value="1"/>
</dbReference>
<dbReference type="InterPro" id="IPR036412">
    <property type="entry name" value="HAD-like_sf"/>
</dbReference>
<dbReference type="InterPro" id="IPR006549">
    <property type="entry name" value="HAD-SF_hydro_IIIA"/>
</dbReference>
<dbReference type="InterPro" id="IPR023214">
    <property type="entry name" value="HAD_sf"/>
</dbReference>
<dbReference type="InterPro" id="IPR004446">
    <property type="entry name" value="Heptose_bisP_phosphatase"/>
</dbReference>
<dbReference type="InterPro" id="IPR006543">
    <property type="entry name" value="Histidinol-phos"/>
</dbReference>
<dbReference type="NCBIfam" id="TIGR01662">
    <property type="entry name" value="HAD-SF-IIIA"/>
    <property type="match status" value="1"/>
</dbReference>
<dbReference type="NCBIfam" id="TIGR01656">
    <property type="entry name" value="Histidinol-ppas"/>
    <property type="match status" value="1"/>
</dbReference>
<dbReference type="NCBIfam" id="NF006506">
    <property type="entry name" value="PRK08942.1"/>
    <property type="match status" value="1"/>
</dbReference>
<dbReference type="PANTHER" id="PTHR42891">
    <property type="entry name" value="D-GLYCERO-BETA-D-MANNO-HEPTOSE-1,7-BISPHOSPHATE 7-PHOSPHATASE"/>
    <property type="match status" value="1"/>
</dbReference>
<dbReference type="PANTHER" id="PTHR42891:SF1">
    <property type="entry name" value="D-GLYCERO-BETA-D-MANNO-HEPTOSE-1,7-BISPHOSPHATE 7-PHOSPHATASE"/>
    <property type="match status" value="1"/>
</dbReference>
<dbReference type="Pfam" id="PF13242">
    <property type="entry name" value="Hydrolase_like"/>
    <property type="match status" value="1"/>
</dbReference>
<dbReference type="PIRSF" id="PIRSF004682">
    <property type="entry name" value="GmhB"/>
    <property type="match status" value="1"/>
</dbReference>
<dbReference type="SUPFAM" id="SSF56784">
    <property type="entry name" value="HAD-like"/>
    <property type="match status" value="1"/>
</dbReference>
<sequence>MKLLILDRDGVINYDSDAYIKTLEEWVPIPGSVDAIAQLSKAGWTVAVATNQSGIARGYYPLATLEAMHARLRALVAEQGGEVGHIVYCPHGPDEGCDCRKPKPGMLRAIAEHYQIGLEGVWFVGDSKGDLEAALAVGAQPVLVKTGKGERTLEKGVPETTLIFDDLAAIARELI</sequence>
<reference evidence="8" key="1">
    <citation type="journal article" date="2002" name="Environ. Microbiol.">
        <title>Complete genome sequence and comparative analysis of the metabolically versatile Pseudomonas putida KT2440.</title>
        <authorList>
            <person name="Nelson K.E."/>
            <person name="Weinel C."/>
            <person name="Paulsen I.T."/>
            <person name="Dodson R.J."/>
            <person name="Hilbert H."/>
            <person name="Martins dos Santos V.A.P."/>
            <person name="Fouts D.E."/>
            <person name="Gill S.R."/>
            <person name="Pop M."/>
            <person name="Holmes M."/>
            <person name="Brinkac L.M."/>
            <person name="Beanan M.J."/>
            <person name="DeBoy R.T."/>
            <person name="Daugherty S.C."/>
            <person name="Kolonay J.F."/>
            <person name="Madupu R."/>
            <person name="Nelson W.C."/>
            <person name="White O."/>
            <person name="Peterson J.D."/>
            <person name="Khouri H.M."/>
            <person name="Hance I."/>
            <person name="Chris Lee P."/>
            <person name="Holtzapple E.K."/>
            <person name="Scanlan D."/>
            <person name="Tran K."/>
            <person name="Moazzez A."/>
            <person name="Utterback T.R."/>
            <person name="Rizzo M."/>
            <person name="Lee K."/>
            <person name="Kosack D."/>
            <person name="Moestl D."/>
            <person name="Wedler H."/>
            <person name="Lauber J."/>
            <person name="Stjepandic D."/>
            <person name="Hoheisel J."/>
            <person name="Straetz M."/>
            <person name="Heim S."/>
            <person name="Kiewitz C."/>
            <person name="Eisen J.A."/>
            <person name="Timmis K.N."/>
            <person name="Duesterhoeft A."/>
            <person name="Tuemmler B."/>
            <person name="Fraser C.M."/>
        </authorList>
    </citation>
    <scope>NUCLEOTIDE SEQUENCE [LARGE SCALE GENOMIC DNA]</scope>
    <source>
        <strain evidence="7 8">ATCC 47054 / DSM 6125 / CFBP 8728 / NCIMB 11950 / KT2440</strain>
    </source>
</reference>
<reference evidence="5" key="2">
    <citation type="journal article" date="2015" name="Proc. Natl. Acad. Sci. U.S.A.">
        <title>Panoramic view of a superfamily of phosphatases through substrate profiling.</title>
        <authorList>
            <person name="Huang H."/>
            <person name="Pandya C."/>
            <person name="Liu C."/>
            <person name="Al-Obaidi N.F."/>
            <person name="Wang M."/>
            <person name="Zheng L."/>
            <person name="Toews Keating S."/>
            <person name="Aono M."/>
            <person name="Love J.D."/>
            <person name="Evans B."/>
            <person name="Seidel R.D."/>
            <person name="Hillerich B.S."/>
            <person name="Garforth S.J."/>
            <person name="Almo S.C."/>
            <person name="Mariano P.S."/>
            <person name="Dunaway-Mariano D."/>
            <person name="Allen K.N."/>
            <person name="Farelli J.D."/>
        </authorList>
    </citation>
    <scope>FUNCTION</scope>
    <scope>CATALYTIC ACTIVITY</scope>
    <scope>COFACTOR</scope>
</reference>
<accession>Q88RS0</accession>